<accession>P04248</accession>
<feature type="initiator methionine" description="Removed" evidence="8">
    <location>
        <position position="1"/>
    </location>
</feature>
<feature type="chain" id="PRO_0000053345" description="Myoglobin">
    <location>
        <begin position="2"/>
        <end position="154"/>
    </location>
</feature>
<feature type="domain" description="Globin" evidence="7">
    <location>
        <begin position="2"/>
        <end position="148"/>
    </location>
</feature>
<feature type="binding site" evidence="5">
    <location>
        <position position="65"/>
    </location>
    <ligand>
        <name>nitrite</name>
        <dbReference type="ChEBI" id="CHEBI:16301"/>
    </ligand>
</feature>
<feature type="binding site" evidence="3 7">
    <location>
        <position position="65"/>
    </location>
    <ligand>
        <name>O2</name>
        <dbReference type="ChEBI" id="CHEBI:15379"/>
    </ligand>
</feature>
<feature type="binding site" description="proximal binding residue" evidence="1">
    <location>
        <position position="94"/>
    </location>
    <ligand>
        <name>heme b</name>
        <dbReference type="ChEBI" id="CHEBI:60344"/>
    </ligand>
    <ligandPart>
        <name>Fe</name>
        <dbReference type="ChEBI" id="CHEBI:18248"/>
    </ligandPart>
</feature>
<feature type="modified residue" description="Phosphoserine" evidence="6">
    <location>
        <position position="4"/>
    </location>
</feature>
<feature type="modified residue" description="Phosphothreonine" evidence="4">
    <location>
        <position position="68"/>
    </location>
</feature>
<feature type="sequence variant">
    <original>A</original>
    <variation>T</variation>
    <location>
        <position position="128"/>
    </location>
</feature>
<evidence type="ECO:0000250" key="1">
    <source>
        <dbReference type="UniProtKB" id="P02144"/>
    </source>
</evidence>
<evidence type="ECO:0000250" key="2">
    <source>
        <dbReference type="UniProtKB" id="P02185"/>
    </source>
</evidence>
<evidence type="ECO:0000250" key="3">
    <source>
        <dbReference type="UniProtKB" id="P02189"/>
    </source>
</evidence>
<evidence type="ECO:0000250" key="4">
    <source>
        <dbReference type="UniProtKB" id="P04247"/>
    </source>
</evidence>
<evidence type="ECO:0000250" key="5">
    <source>
        <dbReference type="UniProtKB" id="P68082"/>
    </source>
</evidence>
<evidence type="ECO:0000250" key="6">
    <source>
        <dbReference type="UniProtKB" id="Q9QZ76"/>
    </source>
</evidence>
<evidence type="ECO:0000255" key="7">
    <source>
        <dbReference type="PROSITE-ProRule" id="PRU00238"/>
    </source>
</evidence>
<evidence type="ECO:0000269" key="8">
    <source ref="1"/>
</evidence>
<protein>
    <recommendedName>
        <fullName>Myoglobin</fullName>
    </recommendedName>
    <alternativeName>
        <fullName evidence="1">Nitrite reductase MB</fullName>
        <ecNumber evidence="1">1.7.-.-</ecNumber>
    </alternativeName>
    <alternativeName>
        <fullName evidence="1">Pseudoperoxidase MB</fullName>
        <ecNumber evidence="1">1.11.1.-</ecNumber>
    </alternativeName>
</protein>
<dbReference type="EC" id="1.7.-.-" evidence="1"/>
<dbReference type="EC" id="1.11.1.-" evidence="1"/>
<dbReference type="PIR" id="A02485">
    <property type="entry name" value="MYOL"/>
</dbReference>
<dbReference type="SMR" id="P04248"/>
<dbReference type="GO" id="GO:0070062">
    <property type="term" value="C:extracellular exosome"/>
    <property type="evidence" value="ECO:0007669"/>
    <property type="project" value="TreeGrafter"/>
</dbReference>
<dbReference type="GO" id="GO:0016528">
    <property type="term" value="C:sarcoplasm"/>
    <property type="evidence" value="ECO:0000250"/>
    <property type="project" value="UniProtKB"/>
</dbReference>
<dbReference type="GO" id="GO:0020037">
    <property type="term" value="F:heme binding"/>
    <property type="evidence" value="ECO:0007669"/>
    <property type="project" value="InterPro"/>
</dbReference>
<dbReference type="GO" id="GO:0046872">
    <property type="term" value="F:metal ion binding"/>
    <property type="evidence" value="ECO:0007669"/>
    <property type="project" value="UniProtKB-KW"/>
</dbReference>
<dbReference type="GO" id="GO:0098809">
    <property type="term" value="F:nitrite reductase activity"/>
    <property type="evidence" value="ECO:0000250"/>
    <property type="project" value="UniProtKB"/>
</dbReference>
<dbReference type="GO" id="GO:0019825">
    <property type="term" value="F:oxygen binding"/>
    <property type="evidence" value="ECO:0007669"/>
    <property type="project" value="InterPro"/>
</dbReference>
<dbReference type="GO" id="GO:0005344">
    <property type="term" value="F:oxygen carrier activity"/>
    <property type="evidence" value="ECO:0000250"/>
    <property type="project" value="UniProtKB"/>
</dbReference>
<dbReference type="GO" id="GO:0004601">
    <property type="term" value="F:peroxidase activity"/>
    <property type="evidence" value="ECO:0000250"/>
    <property type="project" value="UniProtKB"/>
</dbReference>
<dbReference type="GO" id="GO:0019430">
    <property type="term" value="P:removal of superoxide radicals"/>
    <property type="evidence" value="ECO:0000250"/>
    <property type="project" value="UniProtKB"/>
</dbReference>
<dbReference type="CDD" id="cd08926">
    <property type="entry name" value="Mb"/>
    <property type="match status" value="1"/>
</dbReference>
<dbReference type="Gene3D" id="6.10.140.2100">
    <property type="match status" value="1"/>
</dbReference>
<dbReference type="Gene3D" id="6.10.140.2110">
    <property type="match status" value="1"/>
</dbReference>
<dbReference type="InterPro" id="IPR000971">
    <property type="entry name" value="Globin"/>
</dbReference>
<dbReference type="InterPro" id="IPR009050">
    <property type="entry name" value="Globin-like_sf"/>
</dbReference>
<dbReference type="InterPro" id="IPR002335">
    <property type="entry name" value="Myoglobin"/>
</dbReference>
<dbReference type="PANTHER" id="PTHR47132">
    <property type="entry name" value="MYOGLOBIN"/>
    <property type="match status" value="1"/>
</dbReference>
<dbReference type="PANTHER" id="PTHR47132:SF1">
    <property type="entry name" value="MYOGLOBIN"/>
    <property type="match status" value="1"/>
</dbReference>
<dbReference type="Pfam" id="PF00042">
    <property type="entry name" value="Globin"/>
    <property type="match status" value="1"/>
</dbReference>
<dbReference type="PRINTS" id="PR00613">
    <property type="entry name" value="MYOGLOBIN"/>
</dbReference>
<dbReference type="SUPFAM" id="SSF46458">
    <property type="entry name" value="Globin-like"/>
    <property type="match status" value="1"/>
</dbReference>
<dbReference type="PROSITE" id="PS01033">
    <property type="entry name" value="GLOBIN"/>
    <property type="match status" value="1"/>
</dbReference>
<keyword id="KW-0963">Cytoplasm</keyword>
<keyword id="KW-0903">Direct protein sequencing</keyword>
<keyword id="KW-0349">Heme</keyword>
<keyword id="KW-0408">Iron</keyword>
<keyword id="KW-0479">Metal-binding</keyword>
<keyword id="KW-0514">Muscle protein</keyword>
<keyword id="KW-0560">Oxidoreductase</keyword>
<keyword id="KW-0561">Oxygen transport</keyword>
<keyword id="KW-0597">Phosphoprotein</keyword>
<keyword id="KW-0813">Transport</keyword>
<comment type="function">
    <text evidence="1">Monomeric heme protein which primary function is to store oxygen and facilitate its diffusion within muscle tissues. Reversibly binds oxygen through a pentacoordinated heme iron and enables its timely and efficient release as needed during periods of heightened demand. Depending on the oxidative conditions of tissues and cells, and in addition to its ability to bind oxygen, it also has a nitrite reductase activity whereby it regulates the production of bioactive nitric oxide. Under stress conditions, like hypoxia and anoxia, it also protects cells against reactive oxygen species thanks to its pseudoperoxidase activity.</text>
</comment>
<comment type="catalytic activity">
    <reaction evidence="1">
        <text>Fe(III)-heme b-[protein] + nitric oxide + H2O = Fe(II)-heme b-[protein] + nitrite + 2 H(+)</text>
        <dbReference type="Rhea" id="RHEA:77711"/>
        <dbReference type="Rhea" id="RHEA-COMP:18975"/>
        <dbReference type="Rhea" id="RHEA-COMP:18976"/>
        <dbReference type="ChEBI" id="CHEBI:15377"/>
        <dbReference type="ChEBI" id="CHEBI:15378"/>
        <dbReference type="ChEBI" id="CHEBI:16301"/>
        <dbReference type="ChEBI" id="CHEBI:16480"/>
        <dbReference type="ChEBI" id="CHEBI:55376"/>
        <dbReference type="ChEBI" id="CHEBI:60344"/>
    </reaction>
    <physiologicalReaction direction="right-to-left" evidence="1">
        <dbReference type="Rhea" id="RHEA:77713"/>
    </physiologicalReaction>
</comment>
<comment type="catalytic activity">
    <reaction evidence="1">
        <text>H2O2 + AH2 = A + 2 H2O</text>
        <dbReference type="Rhea" id="RHEA:30275"/>
        <dbReference type="ChEBI" id="CHEBI:13193"/>
        <dbReference type="ChEBI" id="CHEBI:15377"/>
        <dbReference type="ChEBI" id="CHEBI:16240"/>
        <dbReference type="ChEBI" id="CHEBI:17499"/>
    </reaction>
</comment>
<comment type="subunit">
    <text evidence="2">Monomeric.</text>
</comment>
<comment type="subcellular location">
    <subcellularLocation>
        <location evidence="1">Cytoplasm</location>
        <location evidence="1">Sarcoplasm</location>
    </subcellularLocation>
</comment>
<comment type="similarity">
    <text evidence="7">Belongs to the globin family.</text>
</comment>
<proteinExistence type="evidence at protein level"/>
<sequence>MGLSDGEWQLVLNVWGKVEGDLAGHGQEVLIKLFKNHPETLEKFDKFKHLKSEDEMKGSEDLKKHGNTVLTALGGILKKKGQHAAEIQPLAQSHATKHKIPIKYLEFISEAIIQVLQSKHPGDFGADAQGAMSKALELFRNDIAAKYKELGFQG</sequence>
<name>MYG_SPAEH</name>
<gene>
    <name type="primary">MB</name>
</gene>
<reference key="1">
    <citation type="journal article" date="1984" name="J. Protein Chem.">
        <title>The myoglobin of rodents: Lagostomus maximus (viscacha) and Spalax ehenbergi (mole rat).</title>
        <authorList>
            <person name="Gurnett A.M."/>
            <person name="O'Connell J.P."/>
            <person name="Harris D.E."/>
            <person name="Lehmann H."/>
            <person name="Joysey K.A."/>
            <person name="Nevo E."/>
        </authorList>
    </citation>
    <scope>PROTEIN SEQUENCE OF 2-154</scope>
</reference>
<organism>
    <name type="scientific">Spalax ehrenbergi</name>
    <name type="common">Middle East blind mole rat</name>
    <name type="synonym">Nannospalax ehrenbergi</name>
    <dbReference type="NCBI Taxonomy" id="30637"/>
    <lineage>
        <taxon>Eukaryota</taxon>
        <taxon>Metazoa</taxon>
        <taxon>Chordata</taxon>
        <taxon>Craniata</taxon>
        <taxon>Vertebrata</taxon>
        <taxon>Euteleostomi</taxon>
        <taxon>Mammalia</taxon>
        <taxon>Eutheria</taxon>
        <taxon>Euarchontoglires</taxon>
        <taxon>Glires</taxon>
        <taxon>Rodentia</taxon>
        <taxon>Myomorpha</taxon>
        <taxon>Muroidea</taxon>
        <taxon>Spalacidae</taxon>
        <taxon>Spalacinae</taxon>
        <taxon>Nannospalax</taxon>
    </lineage>
</organism>